<feature type="signal peptide" evidence="2">
    <location>
        <begin position="1"/>
        <end position="19"/>
    </location>
</feature>
<feature type="chain" id="PRO_0000038291" description="Envelope glycoprotein G">
    <location>
        <begin position="20"/>
        <end position="411"/>
    </location>
</feature>
<feature type="transmembrane region" description="Helical" evidence="2">
    <location>
        <begin position="364"/>
        <end position="384"/>
    </location>
</feature>
<feature type="region of interest" description="Disordered" evidence="3">
    <location>
        <begin position="306"/>
        <end position="345"/>
    </location>
</feature>
<feature type="compositionally biased region" description="Polar residues" evidence="3">
    <location>
        <begin position="306"/>
        <end position="327"/>
    </location>
</feature>
<feature type="compositionally biased region" description="Polar residues" evidence="3">
    <location>
        <begin position="334"/>
        <end position="345"/>
    </location>
</feature>
<feature type="glycosylation site" description="N-linked (GlcNAc...) asparagine; by host" evidence="2">
    <location>
        <position position="83"/>
    </location>
</feature>
<feature type="glycosylation site" description="N-linked (GlcNAc...) asparagine; by host" evidence="2">
    <location>
        <position position="138"/>
    </location>
</feature>
<feature type="glycosylation site" description="N-linked (GlcNAc...) asparagine; by host" evidence="2">
    <location>
        <position position="222"/>
    </location>
</feature>
<feature type="glycosylation site" description="N-linked (GlcNAc...) asparagine; by host" evidence="2">
    <location>
        <position position="245"/>
    </location>
</feature>
<feature type="glycosylation site" description="N-linked (GlcNAc...) asparagine; by host" evidence="2">
    <location>
        <position position="317"/>
    </location>
</feature>
<feature type="glycosylation site" description="N-linked (GlcNAc...) asparagine; by host" evidence="2">
    <location>
        <position position="392"/>
    </location>
</feature>
<comment type="function">
    <text evidence="1">Chemokine-binding protein that inhibits neutrophils' chemotaxis.</text>
</comment>
<comment type="subcellular location">
    <subcellularLocation>
        <location evidence="4">Virion membrane</location>
        <topology evidence="4">Single-pass type I membrane protein</topology>
    </subcellularLocation>
</comment>
<comment type="similarity">
    <text evidence="4">Belongs to the alphaherpesvirinae glycoprotein G family.</text>
</comment>
<protein>
    <recommendedName>
        <fullName>Envelope glycoprotein G</fullName>
        <shortName>gG</shortName>
    </recommendedName>
</protein>
<sequence length="411" mass="45270">MLTVLAALSLLSLLTSATGRLAPDELCYAEPRRTGSPPNTQPERPPVIFEPPTIAIKAESKGCELILLDPPIDVSYRREDKVNASIAWFFDFGACRMPIAYREYYGCIGNAVPSPETCDAYSFTLIRTEGIVEFTIVNMSLLFQPGIYDSGNFIYSVLLDYHIFTGRVTLEVEKDTNYPCGMIHGLTAYGNINVDETMDNASPHPRAVGCFPEPIDNEAWANVTFTELGIPDPNSFLDDEGDYPNISDCHSWESYTYPNTLRQATGPQTLLVGAVGLRILAQAWKFVGDETYDTIRAEAKNLETHVPSSAAESSLENQSTQEESNSPEVAHLRSVNSDDSTHTGGASNGIQDCDSQLKTVYACLALIGLGTCAMIGLIVYICVLRSKLSSRNFSRAQNVKHRNYQRLEYVA</sequence>
<reference evidence="4 5" key="1">
    <citation type="submission" date="2003-11" db="EMBL/GenBank/DDBJ databases">
        <authorList>
            <person name="Davis-Poynter N."/>
            <person name="Nugent J."/>
            <person name="Birch-Machin I."/>
            <person name="Allen G.P."/>
        </authorList>
    </citation>
    <scope>NUCLEOTIDE SEQUENCE [LARGE SCALE GENOMIC DNA]</scope>
</reference>
<keyword id="KW-0325">Glycoprotein</keyword>
<keyword id="KW-0472">Membrane</keyword>
<keyword id="KW-0732">Signal</keyword>
<keyword id="KW-0812">Transmembrane</keyword>
<keyword id="KW-1133">Transmembrane helix</keyword>
<keyword id="KW-0261">Viral envelope protein</keyword>
<keyword id="KW-0946">Virion</keyword>
<evidence type="ECO:0000250" key="1"/>
<evidence type="ECO:0000255" key="2"/>
<evidence type="ECO:0000256" key="3">
    <source>
        <dbReference type="SAM" id="MobiDB-lite"/>
    </source>
</evidence>
<evidence type="ECO:0000305" key="4"/>
<evidence type="ECO:0000312" key="5">
    <source>
        <dbReference type="EMBL" id="AAS45958.1"/>
    </source>
</evidence>
<organismHost>
    <name type="scientific">Equus caballus</name>
    <name type="common">Horse</name>
    <dbReference type="NCBI Taxonomy" id="9796"/>
</organismHost>
<gene>
    <name type="primary">gG</name>
    <name type="ordered locus">70</name>
</gene>
<dbReference type="EMBL" id="AY464052">
    <property type="protein sequence ID" value="AAS45958.1"/>
    <property type="molecule type" value="Genomic_DNA"/>
</dbReference>
<dbReference type="SMR" id="P84393"/>
<dbReference type="GlyCosmos" id="P84393">
    <property type="glycosylation" value="6 sites, No reported glycans"/>
</dbReference>
<dbReference type="KEGG" id="vg:2948582"/>
<dbReference type="Proteomes" id="UP000008296">
    <property type="component" value="Segment"/>
</dbReference>
<dbReference type="GO" id="GO:0016020">
    <property type="term" value="C:membrane"/>
    <property type="evidence" value="ECO:0007669"/>
    <property type="project" value="UniProtKB-KW"/>
</dbReference>
<dbReference type="GO" id="GO:0019031">
    <property type="term" value="C:viral envelope"/>
    <property type="evidence" value="ECO:0007669"/>
    <property type="project" value="UniProtKB-KW"/>
</dbReference>
<dbReference type="GO" id="GO:0055036">
    <property type="term" value="C:virion membrane"/>
    <property type="evidence" value="ECO:0007669"/>
    <property type="project" value="UniProtKB-SubCell"/>
</dbReference>
<dbReference type="Gene3D" id="2.70.230.10">
    <property type="match status" value="1"/>
</dbReference>
<dbReference type="InterPro" id="IPR002896">
    <property type="entry name" value="Herpes_glycop_dom"/>
</dbReference>
<dbReference type="InterPro" id="IPR036179">
    <property type="entry name" value="Ig-like_dom_sf"/>
</dbReference>
<dbReference type="Pfam" id="PF01537">
    <property type="entry name" value="Herpes_glycop_D"/>
    <property type="match status" value="1"/>
</dbReference>
<dbReference type="SUPFAM" id="SSF48726">
    <property type="entry name" value="Immunoglobulin"/>
    <property type="match status" value="1"/>
</dbReference>
<proteinExistence type="inferred from homology"/>
<accession>P84393</accession>
<accession>Q6S6W1</accession>
<organism>
    <name type="scientific">Equine herpesvirus 1 (strain V592)</name>
    <name type="common">EHV-1</name>
    <name type="synonym">Equine abortion virus</name>
    <dbReference type="NCBI Taxonomy" id="310273"/>
    <lineage>
        <taxon>Viruses</taxon>
        <taxon>Duplodnaviria</taxon>
        <taxon>Heunggongvirae</taxon>
        <taxon>Peploviricota</taxon>
        <taxon>Herviviricetes</taxon>
        <taxon>Herpesvirales</taxon>
        <taxon>Orthoherpesviridae</taxon>
        <taxon>Alphaherpesvirinae</taxon>
        <taxon>Varicellovirus</taxon>
        <taxon>Varicellovirus equidalpha1</taxon>
        <taxon>Equid alphaherpesvirus 1</taxon>
    </lineage>
</organism>
<name>GG_EHV1V</name>